<sequence length="411" mass="45813">MSISFDLTIDDTRDQLARHARASLEAKPSLIGMSREEMAAALIAAGVPERQVKMRISQLWHWLYVRGVSDFADMRNISKDLRAMLAQHFTIARPEVVEEQISQDGTRKWLFRFPPRGAGRPVEIESVYIPEEGRGTLCISSQVGCTLTCSFCHTGTQKLVRNLTSEEILAQLLTARDRLGDFPDKDTPDGAMVPAEGRKITNIVMMGMGEPLYNFEEVKKALLIASDGDGLSLSKCRITLSTSGVVPEIYRTGDEIGVMLAISLHAVRDELRDILVPINKKYPLAELIKACREYPGLSNAKRITFEYVMLKDINDSLDDAKLLVKLLQGIPAKINLIPFNPWPGTNYQCSDWEQIEKFADYVNAAGYASPIRTPRGRDILAACGQLKSESERLRKSERLALEAMMIAGHGE</sequence>
<proteinExistence type="inferred from homology"/>
<keyword id="KW-0004">4Fe-4S</keyword>
<keyword id="KW-0963">Cytoplasm</keyword>
<keyword id="KW-1015">Disulfide bond</keyword>
<keyword id="KW-0408">Iron</keyword>
<keyword id="KW-0411">Iron-sulfur</keyword>
<keyword id="KW-0479">Metal-binding</keyword>
<keyword id="KW-0489">Methyltransferase</keyword>
<keyword id="KW-0698">rRNA processing</keyword>
<keyword id="KW-0949">S-adenosyl-L-methionine</keyword>
<keyword id="KW-0808">Transferase</keyword>
<keyword id="KW-0819">tRNA processing</keyword>
<organism>
    <name type="scientific">Brucella abortus (strain S19)</name>
    <dbReference type="NCBI Taxonomy" id="430066"/>
    <lineage>
        <taxon>Bacteria</taxon>
        <taxon>Pseudomonadati</taxon>
        <taxon>Pseudomonadota</taxon>
        <taxon>Alphaproteobacteria</taxon>
        <taxon>Hyphomicrobiales</taxon>
        <taxon>Brucellaceae</taxon>
        <taxon>Brucella/Ochrobactrum group</taxon>
        <taxon>Brucella</taxon>
    </lineage>
</organism>
<comment type="function">
    <text evidence="1">Specifically methylates position 2 of adenine 2503 in 23S rRNA and position 2 of adenine 37 in tRNAs. m2A2503 modification seems to play a crucial role in the proofreading step occurring at the peptidyl transferase center and thus would serve to optimize ribosomal fidelity.</text>
</comment>
<comment type="catalytic activity">
    <reaction evidence="1">
        <text>adenosine(2503) in 23S rRNA + 2 reduced [2Fe-2S]-[ferredoxin] + 2 S-adenosyl-L-methionine = 2-methyladenosine(2503) in 23S rRNA + 5'-deoxyadenosine + L-methionine + 2 oxidized [2Fe-2S]-[ferredoxin] + S-adenosyl-L-homocysteine</text>
        <dbReference type="Rhea" id="RHEA:42916"/>
        <dbReference type="Rhea" id="RHEA-COMP:10000"/>
        <dbReference type="Rhea" id="RHEA-COMP:10001"/>
        <dbReference type="Rhea" id="RHEA-COMP:10152"/>
        <dbReference type="Rhea" id="RHEA-COMP:10282"/>
        <dbReference type="ChEBI" id="CHEBI:17319"/>
        <dbReference type="ChEBI" id="CHEBI:33737"/>
        <dbReference type="ChEBI" id="CHEBI:33738"/>
        <dbReference type="ChEBI" id="CHEBI:57844"/>
        <dbReference type="ChEBI" id="CHEBI:57856"/>
        <dbReference type="ChEBI" id="CHEBI:59789"/>
        <dbReference type="ChEBI" id="CHEBI:74411"/>
        <dbReference type="ChEBI" id="CHEBI:74497"/>
        <dbReference type="EC" id="2.1.1.192"/>
    </reaction>
</comment>
<comment type="catalytic activity">
    <reaction evidence="1">
        <text>adenosine(37) in tRNA + 2 reduced [2Fe-2S]-[ferredoxin] + 2 S-adenosyl-L-methionine = 2-methyladenosine(37) in tRNA + 5'-deoxyadenosine + L-methionine + 2 oxidized [2Fe-2S]-[ferredoxin] + S-adenosyl-L-homocysteine</text>
        <dbReference type="Rhea" id="RHEA:43332"/>
        <dbReference type="Rhea" id="RHEA-COMP:10000"/>
        <dbReference type="Rhea" id="RHEA-COMP:10001"/>
        <dbReference type="Rhea" id="RHEA-COMP:10162"/>
        <dbReference type="Rhea" id="RHEA-COMP:10485"/>
        <dbReference type="ChEBI" id="CHEBI:17319"/>
        <dbReference type="ChEBI" id="CHEBI:33737"/>
        <dbReference type="ChEBI" id="CHEBI:33738"/>
        <dbReference type="ChEBI" id="CHEBI:57844"/>
        <dbReference type="ChEBI" id="CHEBI:57856"/>
        <dbReference type="ChEBI" id="CHEBI:59789"/>
        <dbReference type="ChEBI" id="CHEBI:74411"/>
        <dbReference type="ChEBI" id="CHEBI:74497"/>
        <dbReference type="EC" id="2.1.1.192"/>
    </reaction>
</comment>
<comment type="cofactor">
    <cofactor evidence="1">
        <name>[4Fe-4S] cluster</name>
        <dbReference type="ChEBI" id="CHEBI:49883"/>
    </cofactor>
    <text evidence="1">Binds 1 [4Fe-4S] cluster. The cluster is coordinated with 3 cysteines and an exchangeable S-adenosyl-L-methionine.</text>
</comment>
<comment type="subcellular location">
    <subcellularLocation>
        <location evidence="1">Cytoplasm</location>
    </subcellularLocation>
</comment>
<comment type="miscellaneous">
    <text evidence="1">Reaction proceeds by a ping-pong mechanism involving intermediate methylation of a conserved cysteine residue.</text>
</comment>
<comment type="similarity">
    <text evidence="1">Belongs to the radical SAM superfamily. RlmN family.</text>
</comment>
<dbReference type="EC" id="2.1.1.192" evidence="1"/>
<dbReference type="EMBL" id="CP000887">
    <property type="protein sequence ID" value="ACD71630.1"/>
    <property type="molecule type" value="Genomic_DNA"/>
</dbReference>
<dbReference type="RefSeq" id="WP_002965326.1">
    <property type="nucleotide sequence ID" value="NC_010742.1"/>
</dbReference>
<dbReference type="SMR" id="B2S7X6"/>
<dbReference type="GeneID" id="93017444"/>
<dbReference type="KEGG" id="bmc:BAbS19_I00700"/>
<dbReference type="HOGENOM" id="CLU_029101_2_0_5"/>
<dbReference type="Proteomes" id="UP000002565">
    <property type="component" value="Chromosome 1"/>
</dbReference>
<dbReference type="GO" id="GO:0005737">
    <property type="term" value="C:cytoplasm"/>
    <property type="evidence" value="ECO:0007669"/>
    <property type="project" value="UniProtKB-SubCell"/>
</dbReference>
<dbReference type="GO" id="GO:0051539">
    <property type="term" value="F:4 iron, 4 sulfur cluster binding"/>
    <property type="evidence" value="ECO:0007669"/>
    <property type="project" value="UniProtKB-UniRule"/>
</dbReference>
<dbReference type="GO" id="GO:0046872">
    <property type="term" value="F:metal ion binding"/>
    <property type="evidence" value="ECO:0007669"/>
    <property type="project" value="UniProtKB-KW"/>
</dbReference>
<dbReference type="GO" id="GO:0070040">
    <property type="term" value="F:rRNA (adenine(2503)-C2-)-methyltransferase activity"/>
    <property type="evidence" value="ECO:0007669"/>
    <property type="project" value="UniProtKB-UniRule"/>
</dbReference>
<dbReference type="GO" id="GO:0019843">
    <property type="term" value="F:rRNA binding"/>
    <property type="evidence" value="ECO:0007669"/>
    <property type="project" value="UniProtKB-UniRule"/>
</dbReference>
<dbReference type="GO" id="GO:0002935">
    <property type="term" value="F:tRNA (adenine(37)-C2)-methyltransferase activity"/>
    <property type="evidence" value="ECO:0007669"/>
    <property type="project" value="UniProtKB-UniRule"/>
</dbReference>
<dbReference type="GO" id="GO:0000049">
    <property type="term" value="F:tRNA binding"/>
    <property type="evidence" value="ECO:0007669"/>
    <property type="project" value="UniProtKB-UniRule"/>
</dbReference>
<dbReference type="GO" id="GO:0070475">
    <property type="term" value="P:rRNA base methylation"/>
    <property type="evidence" value="ECO:0007669"/>
    <property type="project" value="UniProtKB-UniRule"/>
</dbReference>
<dbReference type="GO" id="GO:0030488">
    <property type="term" value="P:tRNA methylation"/>
    <property type="evidence" value="ECO:0007669"/>
    <property type="project" value="UniProtKB-UniRule"/>
</dbReference>
<dbReference type="CDD" id="cd01335">
    <property type="entry name" value="Radical_SAM"/>
    <property type="match status" value="1"/>
</dbReference>
<dbReference type="FunFam" id="3.20.20.70:FF:000008">
    <property type="entry name" value="Dual-specificity RNA methyltransferase RlmN"/>
    <property type="match status" value="1"/>
</dbReference>
<dbReference type="Gene3D" id="1.10.150.530">
    <property type="match status" value="1"/>
</dbReference>
<dbReference type="Gene3D" id="3.20.20.70">
    <property type="entry name" value="Aldolase class I"/>
    <property type="match status" value="1"/>
</dbReference>
<dbReference type="HAMAP" id="MF_01849">
    <property type="entry name" value="RNA_methyltr_RlmN"/>
    <property type="match status" value="1"/>
</dbReference>
<dbReference type="InterPro" id="IPR013785">
    <property type="entry name" value="Aldolase_TIM"/>
</dbReference>
<dbReference type="InterPro" id="IPR040072">
    <property type="entry name" value="Methyltransferase_A"/>
</dbReference>
<dbReference type="InterPro" id="IPR048641">
    <property type="entry name" value="RlmN_N"/>
</dbReference>
<dbReference type="InterPro" id="IPR027492">
    <property type="entry name" value="RNA_MTrfase_RlmN"/>
</dbReference>
<dbReference type="InterPro" id="IPR004383">
    <property type="entry name" value="rRNA_lsu_MTrfase_RlmN/Cfr"/>
</dbReference>
<dbReference type="InterPro" id="IPR007197">
    <property type="entry name" value="rSAM"/>
</dbReference>
<dbReference type="NCBIfam" id="TIGR00048">
    <property type="entry name" value="rRNA_mod_RlmN"/>
    <property type="match status" value="1"/>
</dbReference>
<dbReference type="PANTHER" id="PTHR30544">
    <property type="entry name" value="23S RRNA METHYLTRANSFERASE"/>
    <property type="match status" value="1"/>
</dbReference>
<dbReference type="PANTHER" id="PTHR30544:SF5">
    <property type="entry name" value="RADICAL SAM CORE DOMAIN-CONTAINING PROTEIN"/>
    <property type="match status" value="1"/>
</dbReference>
<dbReference type="Pfam" id="PF04055">
    <property type="entry name" value="Radical_SAM"/>
    <property type="match status" value="1"/>
</dbReference>
<dbReference type="Pfam" id="PF21016">
    <property type="entry name" value="RlmN_N"/>
    <property type="match status" value="1"/>
</dbReference>
<dbReference type="PIRSF" id="PIRSF006004">
    <property type="entry name" value="CHP00048"/>
    <property type="match status" value="1"/>
</dbReference>
<dbReference type="SFLD" id="SFLDF00275">
    <property type="entry name" value="adenosine_C2_methyltransferase"/>
    <property type="match status" value="1"/>
</dbReference>
<dbReference type="SFLD" id="SFLDG01062">
    <property type="entry name" value="methyltransferase_(Class_A)"/>
    <property type="match status" value="1"/>
</dbReference>
<dbReference type="SUPFAM" id="SSF102114">
    <property type="entry name" value="Radical SAM enzymes"/>
    <property type="match status" value="1"/>
</dbReference>
<dbReference type="PROSITE" id="PS51918">
    <property type="entry name" value="RADICAL_SAM"/>
    <property type="match status" value="1"/>
</dbReference>
<evidence type="ECO:0000255" key="1">
    <source>
        <dbReference type="HAMAP-Rule" id="MF_01849"/>
    </source>
</evidence>
<evidence type="ECO:0000255" key="2">
    <source>
        <dbReference type="PROSITE-ProRule" id="PRU01266"/>
    </source>
</evidence>
<accession>B2S7X6</accession>
<name>RLMN_BRUA1</name>
<reference key="1">
    <citation type="journal article" date="2008" name="PLoS ONE">
        <title>Genome sequence of Brucella abortus vaccine strain S19 compared to virulent strains yields candidate virulence genes.</title>
        <authorList>
            <person name="Crasta O.R."/>
            <person name="Folkerts O."/>
            <person name="Fei Z."/>
            <person name="Mane S.P."/>
            <person name="Evans C."/>
            <person name="Martino-Catt S."/>
            <person name="Bricker B."/>
            <person name="Yu G."/>
            <person name="Du L."/>
            <person name="Sobral B.W."/>
        </authorList>
    </citation>
    <scope>NUCLEOTIDE SEQUENCE [LARGE SCALE GENOMIC DNA]</scope>
    <source>
        <strain>S19</strain>
    </source>
</reference>
<gene>
    <name evidence="1" type="primary">rlmN</name>
    <name type="ordered locus">BAbS19_I00700</name>
</gene>
<protein>
    <recommendedName>
        <fullName evidence="1">Dual-specificity RNA methyltransferase RlmN</fullName>
        <ecNumber evidence="1">2.1.1.192</ecNumber>
    </recommendedName>
    <alternativeName>
        <fullName evidence="1">23S rRNA (adenine(2503)-C(2))-methyltransferase</fullName>
    </alternativeName>
    <alternativeName>
        <fullName evidence="1">23S rRNA m2A2503 methyltransferase</fullName>
    </alternativeName>
    <alternativeName>
        <fullName evidence="1">Ribosomal RNA large subunit methyltransferase N</fullName>
    </alternativeName>
    <alternativeName>
        <fullName evidence="1">tRNA (adenine(37)-C(2))-methyltransferase</fullName>
    </alternativeName>
    <alternativeName>
        <fullName evidence="1">tRNA m2A37 methyltransferase</fullName>
    </alternativeName>
</protein>
<feature type="chain" id="PRO_1000188553" description="Dual-specificity RNA methyltransferase RlmN">
    <location>
        <begin position="1"/>
        <end position="411"/>
    </location>
</feature>
<feature type="domain" description="Radical SAM core" evidence="2">
    <location>
        <begin position="131"/>
        <end position="380"/>
    </location>
</feature>
<feature type="active site" description="Proton acceptor" evidence="1">
    <location>
        <position position="125"/>
    </location>
</feature>
<feature type="active site" description="S-methylcysteine intermediate" evidence="1">
    <location>
        <position position="383"/>
    </location>
</feature>
<feature type="binding site" evidence="1">
    <location>
        <position position="145"/>
    </location>
    <ligand>
        <name>[4Fe-4S] cluster</name>
        <dbReference type="ChEBI" id="CHEBI:49883"/>
        <note>4Fe-4S-S-AdoMet</note>
    </ligand>
</feature>
<feature type="binding site" evidence="1">
    <location>
        <position position="149"/>
    </location>
    <ligand>
        <name>[4Fe-4S] cluster</name>
        <dbReference type="ChEBI" id="CHEBI:49883"/>
        <note>4Fe-4S-S-AdoMet</note>
    </ligand>
</feature>
<feature type="binding site" evidence="1">
    <location>
        <position position="152"/>
    </location>
    <ligand>
        <name>[4Fe-4S] cluster</name>
        <dbReference type="ChEBI" id="CHEBI:49883"/>
        <note>4Fe-4S-S-AdoMet</note>
    </ligand>
</feature>
<feature type="binding site" evidence="1">
    <location>
        <begin position="209"/>
        <end position="210"/>
    </location>
    <ligand>
        <name>S-adenosyl-L-methionine</name>
        <dbReference type="ChEBI" id="CHEBI:59789"/>
    </ligand>
</feature>
<feature type="binding site" evidence="1">
    <location>
        <position position="241"/>
    </location>
    <ligand>
        <name>S-adenosyl-L-methionine</name>
        <dbReference type="ChEBI" id="CHEBI:59789"/>
    </ligand>
</feature>
<feature type="binding site" evidence="1">
    <location>
        <begin position="263"/>
        <end position="265"/>
    </location>
    <ligand>
        <name>S-adenosyl-L-methionine</name>
        <dbReference type="ChEBI" id="CHEBI:59789"/>
    </ligand>
</feature>
<feature type="binding site" evidence="1">
    <location>
        <position position="340"/>
    </location>
    <ligand>
        <name>S-adenosyl-L-methionine</name>
        <dbReference type="ChEBI" id="CHEBI:59789"/>
    </ligand>
</feature>
<feature type="disulfide bond" description="(transient)" evidence="1">
    <location>
        <begin position="138"/>
        <end position="383"/>
    </location>
</feature>